<gene>
    <name evidence="1" type="primary">pxpA</name>
    <name type="ordered locus">BBR47_26550</name>
</gene>
<dbReference type="EC" id="3.5.2.9" evidence="1"/>
<dbReference type="EMBL" id="AP008955">
    <property type="protein sequence ID" value="BAH43632.1"/>
    <property type="molecule type" value="Genomic_DNA"/>
</dbReference>
<dbReference type="RefSeq" id="WP_015890952.1">
    <property type="nucleotide sequence ID" value="NC_012491.1"/>
</dbReference>
<dbReference type="SMR" id="C0ZCX3"/>
<dbReference type="STRING" id="358681.BBR47_26550"/>
<dbReference type="KEGG" id="bbe:BBR47_26550"/>
<dbReference type="eggNOG" id="COG1540">
    <property type="taxonomic scope" value="Bacteria"/>
</dbReference>
<dbReference type="HOGENOM" id="CLU_069535_0_0_9"/>
<dbReference type="Proteomes" id="UP000001877">
    <property type="component" value="Chromosome"/>
</dbReference>
<dbReference type="GO" id="GO:0017168">
    <property type="term" value="F:5-oxoprolinase (ATP-hydrolyzing) activity"/>
    <property type="evidence" value="ECO:0007669"/>
    <property type="project" value="UniProtKB-UniRule"/>
</dbReference>
<dbReference type="GO" id="GO:0005524">
    <property type="term" value="F:ATP binding"/>
    <property type="evidence" value="ECO:0007669"/>
    <property type="project" value="UniProtKB-UniRule"/>
</dbReference>
<dbReference type="GO" id="GO:0005975">
    <property type="term" value="P:carbohydrate metabolic process"/>
    <property type="evidence" value="ECO:0007669"/>
    <property type="project" value="InterPro"/>
</dbReference>
<dbReference type="CDD" id="cd10787">
    <property type="entry name" value="LamB_YcsF_like"/>
    <property type="match status" value="1"/>
</dbReference>
<dbReference type="Gene3D" id="3.20.20.370">
    <property type="entry name" value="Glycoside hydrolase/deacetylase"/>
    <property type="match status" value="1"/>
</dbReference>
<dbReference type="HAMAP" id="MF_00691">
    <property type="entry name" value="PxpA"/>
    <property type="match status" value="1"/>
</dbReference>
<dbReference type="InterPro" id="IPR011330">
    <property type="entry name" value="Glyco_hydro/deAcase_b/a-brl"/>
</dbReference>
<dbReference type="InterPro" id="IPR005501">
    <property type="entry name" value="LamB/YcsF/PxpA-like"/>
</dbReference>
<dbReference type="NCBIfam" id="NF003814">
    <property type="entry name" value="PRK05406.1-3"/>
    <property type="match status" value="1"/>
</dbReference>
<dbReference type="NCBIfam" id="NF003816">
    <property type="entry name" value="PRK05406.1-5"/>
    <property type="match status" value="1"/>
</dbReference>
<dbReference type="PANTHER" id="PTHR30292:SF0">
    <property type="entry name" value="5-OXOPROLINASE SUBUNIT A"/>
    <property type="match status" value="1"/>
</dbReference>
<dbReference type="PANTHER" id="PTHR30292">
    <property type="entry name" value="UNCHARACTERIZED PROTEIN YBGL-RELATED"/>
    <property type="match status" value="1"/>
</dbReference>
<dbReference type="Pfam" id="PF03746">
    <property type="entry name" value="LamB_YcsF"/>
    <property type="match status" value="1"/>
</dbReference>
<dbReference type="SUPFAM" id="SSF88713">
    <property type="entry name" value="Glycoside hydrolase/deacetylase"/>
    <property type="match status" value="1"/>
</dbReference>
<protein>
    <recommendedName>
        <fullName evidence="1">5-oxoprolinase subunit A</fullName>
        <shortName evidence="1">5-OPase subunit A</shortName>
        <ecNumber evidence="1">3.5.2.9</ecNumber>
    </recommendedName>
    <alternativeName>
        <fullName evidence="1">5-oxoprolinase (ATP-hydrolyzing) subunit A</fullName>
    </alternativeName>
</protein>
<sequence length="254" mass="27110">MKTVDLNCDMGESFGAYQLGNDQEILSYITSANVACGFHAGDPATMRKTVQMALKAGVAIGAHPGFADLVGFGRRNMEISPEEAYDLVVYQIGALQAFVRAEGGVMHHVKPHGALYNMAATRPALAESIALAIYKVNPELVLYGLAGSELTRAGEKIGLITAHEVFADRTYQQDGTLTPRSQPNAIISDQQQSLQQVIRMVSDGRVLTQQGVDIPIRADSICIHGDGAHALAFAQSIREALSGAGITIAARFAR</sequence>
<organism>
    <name type="scientific">Brevibacillus brevis (strain 47 / JCM 6285 / NBRC 100599)</name>
    <dbReference type="NCBI Taxonomy" id="358681"/>
    <lineage>
        <taxon>Bacteria</taxon>
        <taxon>Bacillati</taxon>
        <taxon>Bacillota</taxon>
        <taxon>Bacilli</taxon>
        <taxon>Bacillales</taxon>
        <taxon>Paenibacillaceae</taxon>
        <taxon>Brevibacillus</taxon>
    </lineage>
</organism>
<name>PXPA_BREBN</name>
<reference key="1">
    <citation type="submission" date="2005-03" db="EMBL/GenBank/DDBJ databases">
        <title>Brevibacillus brevis strain 47, complete genome.</title>
        <authorList>
            <person name="Hosoyama A."/>
            <person name="Yamada R."/>
            <person name="Hongo Y."/>
            <person name="Terui Y."/>
            <person name="Ankai A."/>
            <person name="Masuyama W."/>
            <person name="Sekiguchi M."/>
            <person name="Takeda T."/>
            <person name="Asano K."/>
            <person name="Ohji S."/>
            <person name="Ichikawa N."/>
            <person name="Narita S."/>
            <person name="Aoki N."/>
            <person name="Miura H."/>
            <person name="Matsushita S."/>
            <person name="Sekigawa T."/>
            <person name="Yamagata H."/>
            <person name="Yoshikawa H."/>
            <person name="Udaka S."/>
            <person name="Tanikawa S."/>
            <person name="Fujita N."/>
        </authorList>
    </citation>
    <scope>NUCLEOTIDE SEQUENCE [LARGE SCALE GENOMIC DNA]</scope>
    <source>
        <strain>47 / JCM 6285 / NBRC 100599</strain>
    </source>
</reference>
<keyword id="KW-0067">ATP-binding</keyword>
<keyword id="KW-0378">Hydrolase</keyword>
<keyword id="KW-0547">Nucleotide-binding</keyword>
<keyword id="KW-1185">Reference proteome</keyword>
<feature type="chain" id="PRO_1000200451" description="5-oxoprolinase subunit A">
    <location>
        <begin position="1"/>
        <end position="254"/>
    </location>
</feature>
<accession>C0ZCX3</accession>
<comment type="function">
    <text evidence="1">Catalyzes the cleavage of 5-oxoproline to form L-glutamate coupled to the hydrolysis of ATP to ADP and inorganic phosphate.</text>
</comment>
<comment type="catalytic activity">
    <reaction evidence="1">
        <text>5-oxo-L-proline + ATP + 2 H2O = L-glutamate + ADP + phosphate + H(+)</text>
        <dbReference type="Rhea" id="RHEA:10348"/>
        <dbReference type="ChEBI" id="CHEBI:15377"/>
        <dbReference type="ChEBI" id="CHEBI:15378"/>
        <dbReference type="ChEBI" id="CHEBI:29985"/>
        <dbReference type="ChEBI" id="CHEBI:30616"/>
        <dbReference type="ChEBI" id="CHEBI:43474"/>
        <dbReference type="ChEBI" id="CHEBI:58402"/>
        <dbReference type="ChEBI" id="CHEBI:456216"/>
        <dbReference type="EC" id="3.5.2.9"/>
    </reaction>
</comment>
<comment type="subunit">
    <text evidence="1">Forms a complex composed of PxpA, PxpB and PxpC.</text>
</comment>
<comment type="similarity">
    <text evidence="1">Belongs to the LamB/PxpA family.</text>
</comment>
<proteinExistence type="inferred from homology"/>
<evidence type="ECO:0000255" key="1">
    <source>
        <dbReference type="HAMAP-Rule" id="MF_00691"/>
    </source>
</evidence>